<organism>
    <name type="scientific">Zygnema circumcarinatum</name>
    <name type="common">Green alga</name>
    <dbReference type="NCBI Taxonomy" id="35869"/>
    <lineage>
        <taxon>Eukaryota</taxon>
        <taxon>Viridiplantae</taxon>
        <taxon>Streptophyta</taxon>
        <taxon>Zygnematophyceae</taxon>
        <taxon>Zygnematophycidae</taxon>
        <taxon>Zygnematales</taxon>
        <taxon>Zygnemataceae</taxon>
        <taxon>Zygnema</taxon>
    </lineage>
</organism>
<feature type="chain" id="PRO_0000230762" description="Small ribosomal subunit protein uS3c">
    <location>
        <begin position="1"/>
        <end position="236"/>
    </location>
</feature>
<feature type="domain" description="KH type-2">
    <location>
        <begin position="47"/>
        <end position="127"/>
    </location>
</feature>
<comment type="subunit">
    <text evidence="1">Part of the 30S ribosomal subunit.</text>
</comment>
<comment type="subcellular location">
    <subcellularLocation>
        <location>Plastid</location>
        <location>Chloroplast</location>
    </subcellularLocation>
</comment>
<comment type="similarity">
    <text evidence="2">Belongs to the universal ribosomal protein uS3 family.</text>
</comment>
<geneLocation type="chloroplast"/>
<proteinExistence type="inferred from homology"/>
<evidence type="ECO:0000250" key="1"/>
<evidence type="ECO:0000305" key="2"/>
<gene>
    <name type="primary">rps3</name>
</gene>
<keyword id="KW-0150">Chloroplast</keyword>
<keyword id="KW-0934">Plastid</keyword>
<keyword id="KW-0687">Ribonucleoprotein</keyword>
<keyword id="KW-0689">Ribosomal protein</keyword>
<keyword id="KW-0694">RNA-binding</keyword>
<keyword id="KW-0699">rRNA-binding</keyword>
<accession>Q32RN6</accession>
<sequence length="236" mass="26974">MGQKIHPLGFRLGVTQNHHSTWFAPLNNYSELLKEDERIRNCIQQYVRKYVRSSSRSAEIARVQIQKKTDLVEVQIHTASPSLLVQTRVPNRSTNTQEIGIEYLRRNIQNTLNPGNRKLNMTLSQVAKPYGEAIILAEYIALQLESRVAFRKTMKQAIKLANKSGNARGIKIQIAGRLNGAEIARVEWAREGRVPLHTLRAQIDYCHYPAQTIYGVLGIKVWVFQNKSLISNNQQM</sequence>
<name>RR3_ZYGCR</name>
<reference key="1">
    <citation type="journal article" date="2005" name="BMC Biol.">
        <title>The complete chloroplast DNA sequences of the charophycean green algae Staurastrum and Zygnema reveal that the chloroplast genome underwent extensive changes during the evolution of the Zygnematales.</title>
        <authorList>
            <person name="Turmel M."/>
            <person name="Otis C."/>
            <person name="Lemieux C."/>
        </authorList>
    </citation>
    <scope>NUCLEOTIDE SEQUENCE [LARGE SCALE GENOMIC DNA]</scope>
</reference>
<dbReference type="EMBL" id="AY958086">
    <property type="protein sequence ID" value="AAX45873.1"/>
    <property type="molecule type" value="Genomic_DNA"/>
</dbReference>
<dbReference type="RefSeq" id="YP_636490.1">
    <property type="nucleotide sequence ID" value="NC_008117.1"/>
</dbReference>
<dbReference type="SMR" id="Q32RN6"/>
<dbReference type="GeneID" id="4108193"/>
<dbReference type="GO" id="GO:0009507">
    <property type="term" value="C:chloroplast"/>
    <property type="evidence" value="ECO:0007669"/>
    <property type="project" value="UniProtKB-SubCell"/>
</dbReference>
<dbReference type="GO" id="GO:0022627">
    <property type="term" value="C:cytosolic small ribosomal subunit"/>
    <property type="evidence" value="ECO:0007669"/>
    <property type="project" value="TreeGrafter"/>
</dbReference>
<dbReference type="GO" id="GO:0019843">
    <property type="term" value="F:rRNA binding"/>
    <property type="evidence" value="ECO:0007669"/>
    <property type="project" value="UniProtKB-KW"/>
</dbReference>
<dbReference type="GO" id="GO:0003735">
    <property type="term" value="F:structural constituent of ribosome"/>
    <property type="evidence" value="ECO:0007669"/>
    <property type="project" value="InterPro"/>
</dbReference>
<dbReference type="GO" id="GO:0006412">
    <property type="term" value="P:translation"/>
    <property type="evidence" value="ECO:0007669"/>
    <property type="project" value="UniProtKB-UniRule"/>
</dbReference>
<dbReference type="CDD" id="cd02412">
    <property type="entry name" value="KH-II_30S_S3"/>
    <property type="match status" value="1"/>
</dbReference>
<dbReference type="Gene3D" id="3.30.300.20">
    <property type="match status" value="1"/>
</dbReference>
<dbReference type="Gene3D" id="3.30.1140.32">
    <property type="entry name" value="Ribosomal protein S3, C-terminal domain"/>
    <property type="match status" value="1"/>
</dbReference>
<dbReference type="HAMAP" id="MF_01309_B">
    <property type="entry name" value="Ribosomal_uS3_B"/>
    <property type="match status" value="1"/>
</dbReference>
<dbReference type="InterPro" id="IPR015946">
    <property type="entry name" value="KH_dom-like_a/b"/>
</dbReference>
<dbReference type="InterPro" id="IPR009019">
    <property type="entry name" value="KH_sf_prok-type"/>
</dbReference>
<dbReference type="InterPro" id="IPR036419">
    <property type="entry name" value="Ribosomal_S3_C_sf"/>
</dbReference>
<dbReference type="InterPro" id="IPR005704">
    <property type="entry name" value="Ribosomal_uS3_bac-typ"/>
</dbReference>
<dbReference type="InterPro" id="IPR001351">
    <property type="entry name" value="Ribosomal_uS3_C"/>
</dbReference>
<dbReference type="InterPro" id="IPR018280">
    <property type="entry name" value="Ribosomal_uS3_CS"/>
</dbReference>
<dbReference type="NCBIfam" id="TIGR01009">
    <property type="entry name" value="rpsC_bact"/>
    <property type="match status" value="1"/>
</dbReference>
<dbReference type="PANTHER" id="PTHR11760">
    <property type="entry name" value="30S/40S RIBOSOMAL PROTEIN S3"/>
    <property type="match status" value="1"/>
</dbReference>
<dbReference type="PANTHER" id="PTHR11760:SF19">
    <property type="entry name" value="SMALL RIBOSOMAL SUBUNIT PROTEIN US3C"/>
    <property type="match status" value="1"/>
</dbReference>
<dbReference type="Pfam" id="PF00189">
    <property type="entry name" value="Ribosomal_S3_C"/>
    <property type="match status" value="1"/>
</dbReference>
<dbReference type="SUPFAM" id="SSF54814">
    <property type="entry name" value="Prokaryotic type KH domain (KH-domain type II)"/>
    <property type="match status" value="1"/>
</dbReference>
<dbReference type="SUPFAM" id="SSF54821">
    <property type="entry name" value="Ribosomal protein S3 C-terminal domain"/>
    <property type="match status" value="1"/>
</dbReference>
<dbReference type="PROSITE" id="PS00548">
    <property type="entry name" value="RIBOSOMAL_S3"/>
    <property type="match status" value="1"/>
</dbReference>
<protein>
    <recommendedName>
        <fullName evidence="2">Small ribosomal subunit protein uS3c</fullName>
    </recommendedName>
    <alternativeName>
        <fullName>30S ribosomal protein S3, chloroplastic</fullName>
    </alternativeName>
</protein>